<name>NUOC_FRATF</name>
<feature type="chain" id="PRO_0000358096" description="NADH-quinone oxidoreductase subunit C">
    <location>
        <begin position="1"/>
        <end position="216"/>
    </location>
</feature>
<proteinExistence type="inferred from homology"/>
<accession>A7NEK8</accession>
<reference key="1">
    <citation type="journal article" date="2009" name="PLoS ONE">
        <title>Complete genome sequence of Francisella tularensis subspecies holarctica FTNF002-00.</title>
        <authorList>
            <person name="Barabote R.D."/>
            <person name="Xie G."/>
            <person name="Brettin T.S."/>
            <person name="Hinrichs S.H."/>
            <person name="Fey P.D."/>
            <person name="Jay J.J."/>
            <person name="Engle J.L."/>
            <person name="Godbole S.D."/>
            <person name="Noronha J.M."/>
            <person name="Scheuermann R.H."/>
            <person name="Zhou L.W."/>
            <person name="Lion C."/>
            <person name="Dempsey M.P."/>
        </authorList>
    </citation>
    <scope>NUCLEOTIDE SEQUENCE [LARGE SCALE GENOMIC DNA]</scope>
    <source>
        <strain>FTNF002-00 / FTA</strain>
    </source>
</reference>
<sequence>MIVSTKLQDHFEKITKILSGFGVEGCISYGEITFSIRDQRDIHLILKKLKKEYLFEQLTDVTAVDYLTYGQSDWQVGKVVSQTGFSRGRQQDFKTAAVDNRFEIIYQLLSMANNVRIRVKCKLKDAQIILVDSVSDLWPSANWVEREVYDMFGIYFNNHPDLRRVLTDYGFVGHPLRKDFPQTGYVEMRYDENLGRVVYEPVEIDDRVNTPRVIRN</sequence>
<organism>
    <name type="scientific">Francisella tularensis subsp. holarctica (strain FTNF002-00 / FTA)</name>
    <dbReference type="NCBI Taxonomy" id="458234"/>
    <lineage>
        <taxon>Bacteria</taxon>
        <taxon>Pseudomonadati</taxon>
        <taxon>Pseudomonadota</taxon>
        <taxon>Gammaproteobacteria</taxon>
        <taxon>Thiotrichales</taxon>
        <taxon>Francisellaceae</taxon>
        <taxon>Francisella</taxon>
    </lineage>
</organism>
<keyword id="KW-0997">Cell inner membrane</keyword>
<keyword id="KW-1003">Cell membrane</keyword>
<keyword id="KW-0472">Membrane</keyword>
<keyword id="KW-0520">NAD</keyword>
<keyword id="KW-0874">Quinone</keyword>
<keyword id="KW-1278">Translocase</keyword>
<keyword id="KW-0813">Transport</keyword>
<keyword id="KW-0830">Ubiquinone</keyword>
<comment type="function">
    <text evidence="1">NDH-1 shuttles electrons from NADH, via FMN and iron-sulfur (Fe-S) centers, to quinones in the respiratory chain. The immediate electron acceptor for the enzyme in this species is believed to be ubiquinone. Couples the redox reaction to proton translocation (for every two electrons transferred, four hydrogen ions are translocated across the cytoplasmic membrane), and thus conserves the redox energy in a proton gradient.</text>
</comment>
<comment type="catalytic activity">
    <reaction evidence="1">
        <text>a quinone + NADH + 5 H(+)(in) = a quinol + NAD(+) + 4 H(+)(out)</text>
        <dbReference type="Rhea" id="RHEA:57888"/>
        <dbReference type="ChEBI" id="CHEBI:15378"/>
        <dbReference type="ChEBI" id="CHEBI:24646"/>
        <dbReference type="ChEBI" id="CHEBI:57540"/>
        <dbReference type="ChEBI" id="CHEBI:57945"/>
        <dbReference type="ChEBI" id="CHEBI:132124"/>
    </reaction>
</comment>
<comment type="subunit">
    <text evidence="1">NDH-1 is composed of 14 different subunits. Subunits NuoB, C, D, E, F, and G constitute the peripheral sector of the complex.</text>
</comment>
<comment type="subcellular location">
    <subcellularLocation>
        <location evidence="1">Cell inner membrane</location>
        <topology evidence="1">Peripheral membrane protein</topology>
        <orientation evidence="1">Cytoplasmic side</orientation>
    </subcellularLocation>
</comment>
<comment type="similarity">
    <text evidence="1">Belongs to the complex I 30 kDa subunit family.</text>
</comment>
<dbReference type="EC" id="7.1.1.-" evidence="1"/>
<dbReference type="EMBL" id="CP000803">
    <property type="protein sequence ID" value="ABU62411.2"/>
    <property type="molecule type" value="Genomic_DNA"/>
</dbReference>
<dbReference type="SMR" id="A7NEK8"/>
<dbReference type="KEGG" id="fta:FTA_1936"/>
<dbReference type="HOGENOM" id="CLU_042628_2_1_6"/>
<dbReference type="GO" id="GO:0005886">
    <property type="term" value="C:plasma membrane"/>
    <property type="evidence" value="ECO:0007669"/>
    <property type="project" value="UniProtKB-SubCell"/>
</dbReference>
<dbReference type="GO" id="GO:0008137">
    <property type="term" value="F:NADH dehydrogenase (ubiquinone) activity"/>
    <property type="evidence" value="ECO:0007669"/>
    <property type="project" value="InterPro"/>
</dbReference>
<dbReference type="GO" id="GO:0050136">
    <property type="term" value="F:NADH:ubiquinone reductase (non-electrogenic) activity"/>
    <property type="evidence" value="ECO:0007669"/>
    <property type="project" value="UniProtKB-UniRule"/>
</dbReference>
<dbReference type="GO" id="GO:0048038">
    <property type="term" value="F:quinone binding"/>
    <property type="evidence" value="ECO:0007669"/>
    <property type="project" value="UniProtKB-KW"/>
</dbReference>
<dbReference type="Gene3D" id="3.30.460.80">
    <property type="entry name" value="NADH:ubiquinone oxidoreductase, 30kDa subunit"/>
    <property type="match status" value="1"/>
</dbReference>
<dbReference type="HAMAP" id="MF_01357">
    <property type="entry name" value="NDH1_NuoC"/>
    <property type="match status" value="1"/>
</dbReference>
<dbReference type="InterPro" id="IPR010218">
    <property type="entry name" value="NADH_DH_suC"/>
</dbReference>
<dbReference type="InterPro" id="IPR037232">
    <property type="entry name" value="NADH_quin_OxRdtase_su_C/D-like"/>
</dbReference>
<dbReference type="InterPro" id="IPR001268">
    <property type="entry name" value="NADH_UbQ_OxRdtase_30kDa_su"/>
</dbReference>
<dbReference type="InterPro" id="IPR020396">
    <property type="entry name" value="NADH_UbQ_OxRdtase_CS"/>
</dbReference>
<dbReference type="NCBIfam" id="TIGR01961">
    <property type="entry name" value="NuoC_fam"/>
    <property type="match status" value="1"/>
</dbReference>
<dbReference type="NCBIfam" id="NF004730">
    <property type="entry name" value="PRK06074.1-1"/>
    <property type="match status" value="1"/>
</dbReference>
<dbReference type="PANTHER" id="PTHR10884:SF14">
    <property type="entry name" value="NADH DEHYDROGENASE [UBIQUINONE] IRON-SULFUR PROTEIN 3, MITOCHONDRIAL"/>
    <property type="match status" value="1"/>
</dbReference>
<dbReference type="PANTHER" id="PTHR10884">
    <property type="entry name" value="NADH DEHYDROGENASE UBIQUINONE IRON-SULFUR PROTEIN 3"/>
    <property type="match status" value="1"/>
</dbReference>
<dbReference type="Pfam" id="PF00329">
    <property type="entry name" value="Complex1_30kDa"/>
    <property type="match status" value="1"/>
</dbReference>
<dbReference type="SUPFAM" id="SSF143243">
    <property type="entry name" value="Nqo5-like"/>
    <property type="match status" value="1"/>
</dbReference>
<dbReference type="PROSITE" id="PS00542">
    <property type="entry name" value="COMPLEX1_30K"/>
    <property type="match status" value="1"/>
</dbReference>
<evidence type="ECO:0000255" key="1">
    <source>
        <dbReference type="HAMAP-Rule" id="MF_01357"/>
    </source>
</evidence>
<protein>
    <recommendedName>
        <fullName evidence="1">NADH-quinone oxidoreductase subunit C</fullName>
        <ecNumber evidence="1">7.1.1.-</ecNumber>
    </recommendedName>
    <alternativeName>
        <fullName evidence="1">NADH dehydrogenase I subunit C</fullName>
    </alternativeName>
    <alternativeName>
        <fullName evidence="1">NDH-1 subunit C</fullName>
    </alternativeName>
</protein>
<gene>
    <name evidence="1" type="primary">nuoC</name>
    <name type="ordered locus">FTA_1936</name>
</gene>